<evidence type="ECO:0000250" key="1"/>
<evidence type="ECO:0000250" key="2">
    <source>
        <dbReference type="UniProtKB" id="Q9HBY8"/>
    </source>
</evidence>
<evidence type="ECO:0000255" key="3">
    <source>
        <dbReference type="PROSITE-ProRule" id="PRU00159"/>
    </source>
</evidence>
<evidence type="ECO:0000255" key="4">
    <source>
        <dbReference type="PROSITE-ProRule" id="PRU00618"/>
    </source>
</evidence>
<evidence type="ECO:0000255" key="5">
    <source>
        <dbReference type="PROSITE-ProRule" id="PRU10027"/>
    </source>
</evidence>
<evidence type="ECO:0000256" key="6">
    <source>
        <dbReference type="SAM" id="MobiDB-lite"/>
    </source>
</evidence>
<evidence type="ECO:0000269" key="7">
    <source>
    </source>
</evidence>
<evidence type="ECO:0000269" key="8">
    <source>
    </source>
</evidence>
<evidence type="ECO:0000305" key="9"/>
<evidence type="ECO:0007744" key="10">
    <source>
    </source>
</evidence>
<protein>
    <recommendedName>
        <fullName>Serine/threonine-protein kinase Sgk2</fullName>
        <ecNumber>2.7.11.1</ecNumber>
    </recommendedName>
    <alternativeName>
        <fullName>Serum/glucocorticoid-regulated kinase 2</fullName>
    </alternativeName>
</protein>
<gene>
    <name type="primary">Sgk2</name>
</gene>
<proteinExistence type="evidence at protein level"/>
<dbReference type="EC" id="2.7.11.1"/>
<dbReference type="EMBL" id="AABR03025367">
    <property type="status" value="NOT_ANNOTATED_CDS"/>
    <property type="molecule type" value="Genomic_DNA"/>
</dbReference>
<dbReference type="EMBL" id="AF361756">
    <property type="protein sequence ID" value="AAL91351.1"/>
    <property type="molecule type" value="mRNA"/>
</dbReference>
<dbReference type="RefSeq" id="NP_604458.1">
    <property type="nucleotide sequence ID" value="NM_134463.1"/>
</dbReference>
<dbReference type="SMR" id="Q8R4U9"/>
<dbReference type="FunCoup" id="Q8R4U9">
    <property type="interactions" value="128"/>
</dbReference>
<dbReference type="STRING" id="10116.ENSRNOP00000040718"/>
<dbReference type="iPTMnet" id="Q8R4U9"/>
<dbReference type="PhosphoSitePlus" id="Q8R4U9"/>
<dbReference type="PaxDb" id="10116-ENSRNOP00000040718"/>
<dbReference type="Ensembl" id="ENSRNOT00000108319.1">
    <property type="protein sequence ID" value="ENSRNOP00000081213.1"/>
    <property type="gene ID" value="ENSRNOG00000033573.6"/>
</dbReference>
<dbReference type="GeneID" id="171497"/>
<dbReference type="KEGG" id="rno:171497"/>
<dbReference type="AGR" id="RGD:620232"/>
<dbReference type="CTD" id="10110"/>
<dbReference type="RGD" id="620232">
    <property type="gene designation" value="Sgk2"/>
</dbReference>
<dbReference type="eggNOG" id="KOG0598">
    <property type="taxonomic scope" value="Eukaryota"/>
</dbReference>
<dbReference type="GeneTree" id="ENSGT00940000153776"/>
<dbReference type="InParanoid" id="Q8R4U9"/>
<dbReference type="OMA" id="PRANGNI"/>
<dbReference type="OrthoDB" id="19984at9989"/>
<dbReference type="PhylomeDB" id="Q8R4U9"/>
<dbReference type="TreeFam" id="TF320906"/>
<dbReference type="Reactome" id="R-RNO-2672351">
    <property type="pathway name" value="Stimuli-sensing channels"/>
</dbReference>
<dbReference type="PRO" id="PR:Q8R4U9"/>
<dbReference type="Proteomes" id="UP000002494">
    <property type="component" value="Chromosome 3"/>
</dbReference>
<dbReference type="GO" id="GO:0005737">
    <property type="term" value="C:cytoplasm"/>
    <property type="evidence" value="ECO:0007669"/>
    <property type="project" value="UniProtKB-SubCell"/>
</dbReference>
<dbReference type="GO" id="GO:0005654">
    <property type="term" value="C:nucleoplasm"/>
    <property type="evidence" value="ECO:0007669"/>
    <property type="project" value="Ensembl"/>
</dbReference>
<dbReference type="GO" id="GO:0005524">
    <property type="term" value="F:ATP binding"/>
    <property type="evidence" value="ECO:0007669"/>
    <property type="project" value="UniProtKB-KW"/>
</dbReference>
<dbReference type="GO" id="GO:0015459">
    <property type="term" value="F:potassium channel regulator activity"/>
    <property type="evidence" value="ECO:0000250"/>
    <property type="project" value="UniProtKB"/>
</dbReference>
<dbReference type="GO" id="GO:0106310">
    <property type="term" value="F:protein serine kinase activity"/>
    <property type="evidence" value="ECO:0007669"/>
    <property type="project" value="RHEA"/>
</dbReference>
<dbReference type="GO" id="GO:0004674">
    <property type="term" value="F:protein serine/threonine kinase activity"/>
    <property type="evidence" value="ECO:0000318"/>
    <property type="project" value="GO_Central"/>
</dbReference>
<dbReference type="GO" id="GO:0035556">
    <property type="term" value="P:intracellular signal transduction"/>
    <property type="evidence" value="ECO:0000318"/>
    <property type="project" value="GO_Central"/>
</dbReference>
<dbReference type="FunFam" id="1.10.510.10:FF:000065">
    <property type="entry name" value="Non-specific serine/threonine protein kinase"/>
    <property type="match status" value="1"/>
</dbReference>
<dbReference type="FunFam" id="3.30.200.20:FF:000030">
    <property type="entry name" value="Non-specific serine/threonine protein kinase"/>
    <property type="match status" value="1"/>
</dbReference>
<dbReference type="Gene3D" id="3.30.200.20">
    <property type="entry name" value="Phosphorylase Kinase, domain 1"/>
    <property type="match status" value="1"/>
</dbReference>
<dbReference type="Gene3D" id="1.10.510.10">
    <property type="entry name" value="Transferase(Phosphotransferase) domain 1"/>
    <property type="match status" value="1"/>
</dbReference>
<dbReference type="InterPro" id="IPR000961">
    <property type="entry name" value="AGC-kinase_C"/>
</dbReference>
<dbReference type="InterPro" id="IPR011009">
    <property type="entry name" value="Kinase-like_dom_sf"/>
</dbReference>
<dbReference type="InterPro" id="IPR017892">
    <property type="entry name" value="Pkinase_C"/>
</dbReference>
<dbReference type="InterPro" id="IPR000719">
    <property type="entry name" value="Prot_kinase_dom"/>
</dbReference>
<dbReference type="InterPro" id="IPR017441">
    <property type="entry name" value="Protein_kinase_ATP_BS"/>
</dbReference>
<dbReference type="InterPro" id="IPR008271">
    <property type="entry name" value="Ser/Thr_kinase_AS"/>
</dbReference>
<dbReference type="PANTHER" id="PTHR24351">
    <property type="entry name" value="RIBOSOMAL PROTEIN S6 KINASE"/>
    <property type="match status" value="1"/>
</dbReference>
<dbReference type="Pfam" id="PF00069">
    <property type="entry name" value="Pkinase"/>
    <property type="match status" value="1"/>
</dbReference>
<dbReference type="Pfam" id="PF00433">
    <property type="entry name" value="Pkinase_C"/>
    <property type="match status" value="1"/>
</dbReference>
<dbReference type="SMART" id="SM00133">
    <property type="entry name" value="S_TK_X"/>
    <property type="match status" value="1"/>
</dbReference>
<dbReference type="SMART" id="SM00220">
    <property type="entry name" value="S_TKc"/>
    <property type="match status" value="1"/>
</dbReference>
<dbReference type="SUPFAM" id="SSF56112">
    <property type="entry name" value="Protein kinase-like (PK-like)"/>
    <property type="match status" value="1"/>
</dbReference>
<dbReference type="PROSITE" id="PS51285">
    <property type="entry name" value="AGC_KINASE_CTER"/>
    <property type="match status" value="1"/>
</dbReference>
<dbReference type="PROSITE" id="PS00107">
    <property type="entry name" value="PROTEIN_KINASE_ATP"/>
    <property type="match status" value="1"/>
</dbReference>
<dbReference type="PROSITE" id="PS50011">
    <property type="entry name" value="PROTEIN_KINASE_DOM"/>
    <property type="match status" value="1"/>
</dbReference>
<dbReference type="PROSITE" id="PS00108">
    <property type="entry name" value="PROTEIN_KINASE_ST"/>
    <property type="match status" value="1"/>
</dbReference>
<organism>
    <name type="scientific">Rattus norvegicus</name>
    <name type="common">Rat</name>
    <dbReference type="NCBI Taxonomy" id="10116"/>
    <lineage>
        <taxon>Eukaryota</taxon>
        <taxon>Metazoa</taxon>
        <taxon>Chordata</taxon>
        <taxon>Craniata</taxon>
        <taxon>Vertebrata</taxon>
        <taxon>Euteleostomi</taxon>
        <taxon>Mammalia</taxon>
        <taxon>Eutheria</taxon>
        <taxon>Euarchontoglires</taxon>
        <taxon>Glires</taxon>
        <taxon>Rodentia</taxon>
        <taxon>Myomorpha</taxon>
        <taxon>Muroidea</taxon>
        <taxon>Muridae</taxon>
        <taxon>Murinae</taxon>
        <taxon>Rattus</taxon>
    </lineage>
</organism>
<sequence length="367" mass="41361">MASSPVGVPSPQPSRANGNINLGPSANPNARPTDFDFLKVIGKGNYGKVLLAKRKSDGAFYAVKVLQKKSILKNKEQSHIMAERNVLLKNVRHPFLVGLRYSFQTPEKLYFVLDYVNGGELFFHLQREHRFLEPRARFYTAEVASAIGYLHSLNIIYRDLKPENILLDCQGHVVLTDFGLCKECVEPEETTSTFCGTPEYLAPEVLRKEPYDRAVDWWCLGAVLYEMLHGLPPFFNTDVAQMYENILHQPLQIPGGRTVAACDLLQGLLHKDQRQRLGSKEDFLDIKNHMFFSPINWDDLYHKRLTPPFNPNVEGPADLKHFDPEFTQEAVSKSIGCTPDTMSSSSGASSAFLGFSYAQDDDDILDS</sequence>
<reference key="1">
    <citation type="journal article" date="2004" name="Nature">
        <title>Genome sequence of the Brown Norway rat yields insights into mammalian evolution.</title>
        <authorList>
            <person name="Gibbs R.A."/>
            <person name="Weinstock G.M."/>
            <person name="Metzker M.L."/>
            <person name="Muzny D.M."/>
            <person name="Sodergren E.J."/>
            <person name="Scherer S."/>
            <person name="Scott G."/>
            <person name="Steffen D."/>
            <person name="Worley K.C."/>
            <person name="Burch P.E."/>
            <person name="Okwuonu G."/>
            <person name="Hines S."/>
            <person name="Lewis L."/>
            <person name="Deramo C."/>
            <person name="Delgado O."/>
            <person name="Dugan-Rocha S."/>
            <person name="Miner G."/>
            <person name="Morgan M."/>
            <person name="Hawes A."/>
            <person name="Gill R."/>
            <person name="Holt R.A."/>
            <person name="Adams M.D."/>
            <person name="Amanatides P.G."/>
            <person name="Baden-Tillson H."/>
            <person name="Barnstead M."/>
            <person name="Chin S."/>
            <person name="Evans C.A."/>
            <person name="Ferriera S."/>
            <person name="Fosler C."/>
            <person name="Glodek A."/>
            <person name="Gu Z."/>
            <person name="Jennings D."/>
            <person name="Kraft C.L."/>
            <person name="Nguyen T."/>
            <person name="Pfannkoch C.M."/>
            <person name="Sitter C."/>
            <person name="Sutton G.G."/>
            <person name="Venter J.C."/>
            <person name="Woodage T."/>
            <person name="Smith D."/>
            <person name="Lee H.-M."/>
            <person name="Gustafson E."/>
            <person name="Cahill P."/>
            <person name="Kana A."/>
            <person name="Doucette-Stamm L."/>
            <person name="Weinstock K."/>
            <person name="Fechtel K."/>
            <person name="Weiss R.B."/>
            <person name="Dunn D.M."/>
            <person name="Green E.D."/>
            <person name="Blakesley R.W."/>
            <person name="Bouffard G.G."/>
            <person name="De Jong P.J."/>
            <person name="Osoegawa K."/>
            <person name="Zhu B."/>
            <person name="Marra M."/>
            <person name="Schein J."/>
            <person name="Bosdet I."/>
            <person name="Fjell C."/>
            <person name="Jones S."/>
            <person name="Krzywinski M."/>
            <person name="Mathewson C."/>
            <person name="Siddiqui A."/>
            <person name="Wye N."/>
            <person name="McPherson J."/>
            <person name="Zhao S."/>
            <person name="Fraser C.M."/>
            <person name="Shetty J."/>
            <person name="Shatsman S."/>
            <person name="Geer K."/>
            <person name="Chen Y."/>
            <person name="Abramzon S."/>
            <person name="Nierman W.C."/>
            <person name="Havlak P.H."/>
            <person name="Chen R."/>
            <person name="Durbin K.J."/>
            <person name="Egan A."/>
            <person name="Ren Y."/>
            <person name="Song X.-Z."/>
            <person name="Li B."/>
            <person name="Liu Y."/>
            <person name="Qin X."/>
            <person name="Cawley S."/>
            <person name="Cooney A.J."/>
            <person name="D'Souza L.M."/>
            <person name="Martin K."/>
            <person name="Wu J.Q."/>
            <person name="Gonzalez-Garay M.L."/>
            <person name="Jackson A.R."/>
            <person name="Kalafus K.J."/>
            <person name="McLeod M.P."/>
            <person name="Milosavljevic A."/>
            <person name="Virk D."/>
            <person name="Volkov A."/>
            <person name="Wheeler D.A."/>
            <person name="Zhang Z."/>
            <person name="Bailey J.A."/>
            <person name="Eichler E.E."/>
            <person name="Tuzun E."/>
            <person name="Birney E."/>
            <person name="Mongin E."/>
            <person name="Ureta-Vidal A."/>
            <person name="Woodwark C."/>
            <person name="Zdobnov E."/>
            <person name="Bork P."/>
            <person name="Suyama M."/>
            <person name="Torrents D."/>
            <person name="Alexandersson M."/>
            <person name="Trask B.J."/>
            <person name="Young J.M."/>
            <person name="Huang H."/>
            <person name="Wang H."/>
            <person name="Xing H."/>
            <person name="Daniels S."/>
            <person name="Gietzen D."/>
            <person name="Schmidt J."/>
            <person name="Stevens K."/>
            <person name="Vitt U."/>
            <person name="Wingrove J."/>
            <person name="Camara F."/>
            <person name="Mar Alba M."/>
            <person name="Abril J.F."/>
            <person name="Guigo R."/>
            <person name="Smit A."/>
            <person name="Dubchak I."/>
            <person name="Rubin E.M."/>
            <person name="Couronne O."/>
            <person name="Poliakov A."/>
            <person name="Huebner N."/>
            <person name="Ganten D."/>
            <person name="Goesele C."/>
            <person name="Hummel O."/>
            <person name="Kreitler T."/>
            <person name="Lee Y.-A."/>
            <person name="Monti J."/>
            <person name="Schulz H."/>
            <person name="Zimdahl H."/>
            <person name="Himmelbauer H."/>
            <person name="Lehrach H."/>
            <person name="Jacob H.J."/>
            <person name="Bromberg S."/>
            <person name="Gullings-Handley J."/>
            <person name="Jensen-Seaman M.I."/>
            <person name="Kwitek A.E."/>
            <person name="Lazar J."/>
            <person name="Pasko D."/>
            <person name="Tonellato P.J."/>
            <person name="Twigger S."/>
            <person name="Ponting C.P."/>
            <person name="Duarte J.M."/>
            <person name="Rice S."/>
            <person name="Goodstadt L."/>
            <person name="Beatson S.A."/>
            <person name="Emes R.D."/>
            <person name="Winter E.E."/>
            <person name="Webber C."/>
            <person name="Brandt P."/>
            <person name="Nyakatura G."/>
            <person name="Adetobi M."/>
            <person name="Chiaromonte F."/>
            <person name="Elnitski L."/>
            <person name="Eswara P."/>
            <person name="Hardison R.C."/>
            <person name="Hou M."/>
            <person name="Kolbe D."/>
            <person name="Makova K."/>
            <person name="Miller W."/>
            <person name="Nekrutenko A."/>
            <person name="Riemer C."/>
            <person name="Schwartz S."/>
            <person name="Taylor J."/>
            <person name="Yang S."/>
            <person name="Zhang Y."/>
            <person name="Lindpaintner K."/>
            <person name="Andrews T.D."/>
            <person name="Caccamo M."/>
            <person name="Clamp M."/>
            <person name="Clarke L."/>
            <person name="Curwen V."/>
            <person name="Durbin R.M."/>
            <person name="Eyras E."/>
            <person name="Searle S.M."/>
            <person name="Cooper G.M."/>
            <person name="Batzoglou S."/>
            <person name="Brudno M."/>
            <person name="Sidow A."/>
            <person name="Stone E.A."/>
            <person name="Payseur B.A."/>
            <person name="Bourque G."/>
            <person name="Lopez-Otin C."/>
            <person name="Puente X.S."/>
            <person name="Chakrabarti K."/>
            <person name="Chatterji S."/>
            <person name="Dewey C."/>
            <person name="Pachter L."/>
            <person name="Bray N."/>
            <person name="Yap V.B."/>
            <person name="Caspi A."/>
            <person name="Tesler G."/>
            <person name="Pevzner P.A."/>
            <person name="Haussler D."/>
            <person name="Roskin K.M."/>
            <person name="Baertsch R."/>
            <person name="Clawson H."/>
            <person name="Furey T.S."/>
            <person name="Hinrichs A.S."/>
            <person name="Karolchik D."/>
            <person name="Kent W.J."/>
            <person name="Rosenbloom K.R."/>
            <person name="Trumbower H."/>
            <person name="Weirauch M."/>
            <person name="Cooper D.N."/>
            <person name="Stenson P.D."/>
            <person name="Ma B."/>
            <person name="Brent M."/>
            <person name="Arumugam M."/>
            <person name="Shteynberg D."/>
            <person name="Copley R.R."/>
            <person name="Taylor M.S."/>
            <person name="Riethman H."/>
            <person name="Mudunuri U."/>
            <person name="Peterson J."/>
            <person name="Guyer M."/>
            <person name="Felsenfeld A."/>
            <person name="Old S."/>
            <person name="Mockrin S."/>
            <person name="Collins F.S."/>
        </authorList>
    </citation>
    <scope>NUCLEOTIDE SEQUENCE [LARGE SCALE GENOMIC DNA]</scope>
    <source>
        <strain>Brown Norway</strain>
    </source>
</reference>
<reference key="2">
    <citation type="submission" date="2001-03" db="EMBL/GenBank/DDBJ databases">
        <title>SGK2 and SGK3 mRNA expression in rat kidney.</title>
        <authorList>
            <person name="Feng Y.X."/>
            <person name="Huber S.M."/>
            <person name="Waerntges S."/>
            <person name="Lang F."/>
        </authorList>
    </citation>
    <scope>NUCLEOTIDE SEQUENCE [MRNA] OF 18-319</scope>
    <source>
        <strain>Sprague-Dawley</strain>
        <tissue>Kidney</tissue>
    </source>
</reference>
<reference key="3">
    <citation type="journal article" date="2004" name="Biochem. Biophys. Res. Commun.">
        <title>Stimulation of the EAAT4 glutamate transporter by SGK protein kinase isoforms and PKB.</title>
        <authorList>
            <person name="Boehmer C."/>
            <person name="Philippin M."/>
            <person name="Rajamanickam J."/>
            <person name="Mack A."/>
            <person name="Broer S."/>
            <person name="Palmada M."/>
            <person name="Lang F."/>
        </authorList>
    </citation>
    <scope>FUNCTION IN THE REGULATION OF SLC1A6/EAAT4</scope>
</reference>
<reference key="4">
    <citation type="journal article" date="2010" name="Am. J. Physiol.">
        <title>Expression and role of serum and glucocorticoid-regulated kinase 2 in the regulation of Na+/H+ exchanger 3 in the mammalian kidney.</title>
        <authorList>
            <person name="Pao A.C."/>
            <person name="Bhargava A."/>
            <person name="Di Sole F."/>
            <person name="Quigley R."/>
            <person name="Shao X."/>
            <person name="Wang J."/>
            <person name="Thomas S."/>
            <person name="Zhang J."/>
            <person name="Shi M."/>
            <person name="Funder J.W."/>
            <person name="Moe O.W."/>
            <person name="Pearce D."/>
        </authorList>
    </citation>
    <scope>FUNCTION IN THE REGULATION OF SLC9A3/NHE3</scope>
    <scope>TISSUE SPECIFICITY</scope>
</reference>
<reference key="5">
    <citation type="journal article" date="2012" name="Nat. Commun.">
        <title>Quantitative maps of protein phosphorylation sites across 14 different rat organs and tissues.</title>
        <authorList>
            <person name="Lundby A."/>
            <person name="Secher A."/>
            <person name="Lage K."/>
            <person name="Nordsborg N.B."/>
            <person name="Dmytriyev A."/>
            <person name="Lundby C."/>
            <person name="Olsen J.V."/>
        </authorList>
    </citation>
    <scope>PHOSPHORYLATION [LARGE SCALE ANALYSIS] AT SER-10</scope>
    <scope>IDENTIFICATION BY MASS SPECTROMETRY [LARGE SCALE ANALYSIS]</scope>
</reference>
<feature type="chain" id="PRO_0000086648" description="Serine/threonine-protein kinase Sgk2">
    <location>
        <begin position="1"/>
        <end position="367"/>
    </location>
</feature>
<feature type="domain" description="Protein kinase" evidence="3">
    <location>
        <begin position="35"/>
        <end position="292"/>
    </location>
</feature>
<feature type="domain" description="AGC-kinase C-terminal" evidence="4">
    <location>
        <begin position="293"/>
        <end position="367"/>
    </location>
</feature>
<feature type="region of interest" description="Disordered" evidence="6">
    <location>
        <begin position="1"/>
        <end position="28"/>
    </location>
</feature>
<feature type="short sequence motif" description="Nuclear localization signal" evidence="1">
    <location>
        <begin position="68"/>
        <end position="77"/>
    </location>
</feature>
<feature type="compositionally biased region" description="Polar residues" evidence="6">
    <location>
        <begin position="15"/>
        <end position="28"/>
    </location>
</feature>
<feature type="active site" description="Proton acceptor" evidence="3 5">
    <location>
        <position position="159"/>
    </location>
</feature>
<feature type="binding site" evidence="3">
    <location>
        <begin position="41"/>
        <end position="49"/>
    </location>
    <ligand>
        <name>ATP</name>
        <dbReference type="ChEBI" id="CHEBI:30616"/>
    </ligand>
</feature>
<feature type="binding site" evidence="3">
    <location>
        <position position="64"/>
    </location>
    <ligand>
        <name>ATP</name>
        <dbReference type="ChEBI" id="CHEBI:30616"/>
    </ligand>
</feature>
<feature type="modified residue" description="Phosphoserine" evidence="10">
    <location>
        <position position="10"/>
    </location>
</feature>
<feature type="modified residue" description="Phosphothreonine; by PDPK1" evidence="2">
    <location>
        <position position="193"/>
    </location>
</feature>
<feature type="modified residue" description="Phosphoserine" evidence="4">
    <location>
        <position position="334"/>
    </location>
</feature>
<feature type="modified residue" description="Phosphoserine" evidence="4">
    <location>
        <position position="356"/>
    </location>
</feature>
<feature type="modified residue" description="Phosphotyrosine" evidence="4">
    <location>
        <position position="357"/>
    </location>
</feature>
<keyword id="KW-0067">ATP-binding</keyword>
<keyword id="KW-0963">Cytoplasm</keyword>
<keyword id="KW-0418">Kinase</keyword>
<keyword id="KW-0547">Nucleotide-binding</keyword>
<keyword id="KW-0539">Nucleus</keyword>
<keyword id="KW-0597">Phosphoprotein</keyword>
<keyword id="KW-1185">Reference proteome</keyword>
<keyword id="KW-0723">Serine/threonine-protein kinase</keyword>
<keyword id="KW-0808">Transferase</keyword>
<name>SGK2_RAT</name>
<accession>Q8R4U9</accession>
<comment type="function">
    <text evidence="7 8">Serine/threonine-protein kinase which is involved in the regulation of a wide variety of ion channels, membrane transporters, cell growth, survival and proliferation. Up-regulates Na(+) channels: SCNN1A/ENAC, K(+) channels: KCNA3/Kv1.3, KCNE1 and KCNQ1, amino acid transporter: SLC6A19, glutamate transporter: SLC1A6/EAAT4, glutamate receptors: GRIA1/GLUR1 and GRIK2/GLUR6, Na(+)/H(+) exchanger: SLC9A3/NHE3, and the Na(+)/K(+) ATPase.</text>
</comment>
<comment type="catalytic activity">
    <reaction>
        <text>L-seryl-[protein] + ATP = O-phospho-L-seryl-[protein] + ADP + H(+)</text>
        <dbReference type="Rhea" id="RHEA:17989"/>
        <dbReference type="Rhea" id="RHEA-COMP:9863"/>
        <dbReference type="Rhea" id="RHEA-COMP:11604"/>
        <dbReference type="ChEBI" id="CHEBI:15378"/>
        <dbReference type="ChEBI" id="CHEBI:29999"/>
        <dbReference type="ChEBI" id="CHEBI:30616"/>
        <dbReference type="ChEBI" id="CHEBI:83421"/>
        <dbReference type="ChEBI" id="CHEBI:456216"/>
        <dbReference type="EC" id="2.7.11.1"/>
    </reaction>
</comment>
<comment type="catalytic activity">
    <reaction>
        <text>L-threonyl-[protein] + ATP = O-phospho-L-threonyl-[protein] + ADP + H(+)</text>
        <dbReference type="Rhea" id="RHEA:46608"/>
        <dbReference type="Rhea" id="RHEA-COMP:11060"/>
        <dbReference type="Rhea" id="RHEA-COMP:11605"/>
        <dbReference type="ChEBI" id="CHEBI:15378"/>
        <dbReference type="ChEBI" id="CHEBI:30013"/>
        <dbReference type="ChEBI" id="CHEBI:30616"/>
        <dbReference type="ChEBI" id="CHEBI:61977"/>
        <dbReference type="ChEBI" id="CHEBI:456216"/>
        <dbReference type="EC" id="2.7.11.1"/>
    </reaction>
</comment>
<comment type="activity regulation">
    <text>Two specific sites, one in the kinase domain (Thr-193) and the other in the C-terminal regulatory region (Ser-356), need to be phosphorylated for its full activation.</text>
</comment>
<comment type="subcellular location">
    <subcellularLocation>
        <location evidence="1">Cytoplasm</location>
    </subcellularLocation>
    <subcellularLocation>
        <location evidence="1">Nucleus</location>
    </subcellularLocation>
</comment>
<comment type="tissue specificity">
    <text evidence="8">Expressed in the proximal tubule and thick ascending limb of the loop of Henle (TALH).</text>
</comment>
<comment type="PTM">
    <text evidence="1">Activated by phosphorylation on Ser-356 by an unknown kinase (may be mTORC2 but not confirmed), transforming it into a substrate for PDPK1 which then phosphorylates it on Thr-193.</text>
</comment>
<comment type="similarity">
    <text evidence="9">Belongs to the protein kinase superfamily. AGC Ser/Thr protein kinase family.</text>
</comment>